<comment type="function">
    <text evidence="2">Has antimicrobial activity against Gram-positive bacteria S.aureus ATCC 2592 (MIC=10.0 uM), S.aureus ATCC 43300 (MIC=15.0 uM) and B.subtilis (MIC=40.0 uM), against Gram-negative bacteria E.coli ML-35P (MIC=10.0 uM), P.aeruginosa PA01 (MIC=5.0 uM) and P.aeruginosa ATCC 27853 (MIC=5.0 uM) and against fungus C.albicans ATCC 2002 (MIC=10.0 uM).</text>
</comment>
<comment type="subcellular location">
    <subcellularLocation>
        <location evidence="1 2">Secreted</location>
    </subcellularLocation>
</comment>
<comment type="tissue specificity">
    <text evidence="2">Expressed by the skin glands.</text>
</comment>
<comment type="mass spectrometry" mass="3520.8" method="MALDI" evidence="2"/>
<comment type="similarity">
    <text evidence="1">Belongs to the frog skin active peptide (FSAP) family. Brevinin subfamily.</text>
</comment>
<feature type="signal peptide" evidence="1">
    <location>
        <begin position="1"/>
        <end position="22"/>
    </location>
</feature>
<feature type="propeptide" id="PRO_0000445403" evidence="5">
    <location>
        <begin position="23"/>
        <end position="40"/>
    </location>
</feature>
<feature type="peptide" id="PRO_0000445404" description="Rugosin-LK1" evidence="2">
    <location>
        <begin position="43"/>
        <end position="75"/>
    </location>
</feature>
<sequence length="75" mass="8475">MFTMKKSLLFLFFLGTISLSFCEEERSADEDDEGEMTEEEKRSIRDKIKTMAIDLAKSAGTGVLKTLICKLDKSC</sequence>
<organism>
    <name type="scientific">Limnonectes kuhlii</name>
    <name type="common">Kuhl's Creek frog</name>
    <name type="synonym">Rana kuhlii</name>
    <dbReference type="NCBI Taxonomy" id="110107"/>
    <lineage>
        <taxon>Eukaryota</taxon>
        <taxon>Metazoa</taxon>
        <taxon>Chordata</taxon>
        <taxon>Craniata</taxon>
        <taxon>Vertebrata</taxon>
        <taxon>Euteleostomi</taxon>
        <taxon>Amphibia</taxon>
        <taxon>Batrachia</taxon>
        <taxon>Anura</taxon>
        <taxon>Neobatrachia</taxon>
        <taxon>Ranoidea</taxon>
        <taxon>Dicroglossidae</taxon>
        <taxon>Dicroglossinae</taxon>
        <taxon>Limnonectes</taxon>
    </lineage>
</organism>
<name>RUG1_LIMKU</name>
<reference evidence="4" key="1">
    <citation type="journal article" date="2013" name="Mol. Biol. Rep.">
        <title>Five novel antimicrobial peptides from the Kuhl's wart frog skin secretions, Limnonectes kuhlii.</title>
        <authorList>
            <person name="Wang G."/>
            <person name="Wang Y."/>
            <person name="Ma D."/>
            <person name="Liu H."/>
            <person name="Li J."/>
            <person name="Zhang K."/>
            <person name="Yang X."/>
            <person name="Lai R."/>
            <person name="Liu J."/>
        </authorList>
    </citation>
    <scope>NUCLEOTIDE SEQUENCE [MRNA]</scope>
    <scope>PROTEIN SEQUENCE OF 43-75</scope>
    <scope>FUNCTION</scope>
    <scope>SUBCELLULAR LOCATION</scope>
    <scope>TISSUE SPECIFICITY</scope>
    <scope>MASS SPECTROMETRY</scope>
    <source>
        <tissue evidence="3">Skin</tissue>
        <tissue evidence="3">Skin secretion</tissue>
    </source>
</reference>
<keyword id="KW-0878">Amphibian defense peptide</keyword>
<keyword id="KW-0044">Antibiotic</keyword>
<keyword id="KW-0929">Antimicrobial</keyword>
<keyword id="KW-0165">Cleavage on pair of basic residues</keyword>
<keyword id="KW-0903">Direct protein sequencing</keyword>
<keyword id="KW-0295">Fungicide</keyword>
<keyword id="KW-0964">Secreted</keyword>
<keyword id="KW-0732">Signal</keyword>
<dbReference type="EMBL" id="EU346906">
    <property type="protein sequence ID" value="ACB12322.1"/>
    <property type="molecule type" value="mRNA"/>
</dbReference>
<dbReference type="GO" id="GO:0005576">
    <property type="term" value="C:extracellular region"/>
    <property type="evidence" value="ECO:0000314"/>
    <property type="project" value="UniProtKB"/>
</dbReference>
<dbReference type="GO" id="GO:0061844">
    <property type="term" value="P:antimicrobial humoral immune response mediated by antimicrobial peptide"/>
    <property type="evidence" value="ECO:0000314"/>
    <property type="project" value="UniProtKB"/>
</dbReference>
<dbReference type="GO" id="GO:0050832">
    <property type="term" value="P:defense response to fungus"/>
    <property type="evidence" value="ECO:0000314"/>
    <property type="project" value="UniProtKB"/>
</dbReference>
<dbReference type="GO" id="GO:0050829">
    <property type="term" value="P:defense response to Gram-negative bacterium"/>
    <property type="evidence" value="ECO:0000314"/>
    <property type="project" value="UniProtKB"/>
</dbReference>
<dbReference type="GO" id="GO:0050830">
    <property type="term" value="P:defense response to Gram-positive bacterium"/>
    <property type="evidence" value="ECO:0000314"/>
    <property type="project" value="UniProtKB"/>
</dbReference>
<dbReference type="GO" id="GO:0031640">
    <property type="term" value="P:killing of cells of another organism"/>
    <property type="evidence" value="ECO:0007669"/>
    <property type="project" value="UniProtKB-KW"/>
</dbReference>
<dbReference type="InterPro" id="IPR012521">
    <property type="entry name" value="Antimicrobial_frog_2"/>
</dbReference>
<dbReference type="InterPro" id="IPR004275">
    <property type="entry name" value="Frog_antimicrobial_propeptide"/>
</dbReference>
<dbReference type="Pfam" id="PF08023">
    <property type="entry name" value="Antimicrobial_2"/>
    <property type="match status" value="1"/>
</dbReference>
<dbReference type="Pfam" id="PF03032">
    <property type="entry name" value="FSAP_sig_propep"/>
    <property type="match status" value="1"/>
</dbReference>
<evidence type="ECO:0000255" key="1"/>
<evidence type="ECO:0000269" key="2">
    <source>
    </source>
</evidence>
<evidence type="ECO:0000303" key="3">
    <source>
    </source>
</evidence>
<evidence type="ECO:0000305" key="4"/>
<evidence type="ECO:0000305" key="5">
    <source>
    </source>
</evidence>
<accession>C3RT23</accession>
<proteinExistence type="evidence at protein level"/>
<protein>
    <recommendedName>
        <fullName evidence="3">Rugosin-LK1</fullName>
    </recommendedName>
</protein>